<accession>P59166</accession>
<reference key="1">
    <citation type="journal article" date="2002" name="Nat. Biotechnol.">
        <title>Genome sequence of the dissimilatory metal ion-reducing bacterium Shewanella oneidensis.</title>
        <authorList>
            <person name="Heidelberg J.F."/>
            <person name="Paulsen I.T."/>
            <person name="Nelson K.E."/>
            <person name="Gaidos E.J."/>
            <person name="Nelson W.C."/>
            <person name="Read T.D."/>
            <person name="Eisen J.A."/>
            <person name="Seshadri R."/>
            <person name="Ward N.L."/>
            <person name="Methe B.A."/>
            <person name="Clayton R.A."/>
            <person name="Meyer T."/>
            <person name="Tsapin A."/>
            <person name="Scott J."/>
            <person name="Beanan M.J."/>
            <person name="Brinkac L.M."/>
            <person name="Daugherty S.C."/>
            <person name="DeBoy R.T."/>
            <person name="Dodson R.J."/>
            <person name="Durkin A.S."/>
            <person name="Haft D.H."/>
            <person name="Kolonay J.F."/>
            <person name="Madupu R."/>
            <person name="Peterson J.D."/>
            <person name="Umayam L.A."/>
            <person name="White O."/>
            <person name="Wolf A.M."/>
            <person name="Vamathevan J.J."/>
            <person name="Weidman J.F."/>
            <person name="Impraim M."/>
            <person name="Lee K."/>
            <person name="Berry K.J."/>
            <person name="Lee C."/>
            <person name="Mueller J."/>
            <person name="Khouri H.M."/>
            <person name="Gill J."/>
            <person name="Utterback T.R."/>
            <person name="McDonald L.A."/>
            <person name="Feldblyum T.V."/>
            <person name="Smith H.O."/>
            <person name="Venter J.C."/>
            <person name="Nealson K.H."/>
            <person name="Fraser C.M."/>
        </authorList>
    </citation>
    <scope>NUCLEOTIDE SEQUENCE [LARGE SCALE GENOMIC DNA]</scope>
    <source>
        <strain>ATCC 700550 / JCM 31522 / CIP 106686 / LMG 19005 / NCIMB 14063 / MR-1</strain>
    </source>
</reference>
<keyword id="KW-0488">Methylation</keyword>
<keyword id="KW-1185">Reference proteome</keyword>
<keyword id="KW-0687">Ribonucleoprotein</keyword>
<keyword id="KW-0689">Ribosomal protein</keyword>
<keyword id="KW-0694">RNA-binding</keyword>
<keyword id="KW-0699">rRNA-binding</keyword>
<keyword id="KW-0820">tRNA-binding</keyword>
<proteinExistence type="inferred from homology"/>
<comment type="function">
    <text evidence="2">With S4 and S5 plays an important role in translational accuracy.</text>
</comment>
<comment type="function">
    <text evidence="2">Interacts with and stabilizes bases of the 16S rRNA that are involved in tRNA selection in the A site and with the mRNA backbone. Located at the interface of the 30S and 50S subunits, it traverses the body of the 30S subunit contacting proteins on the other side and probably holding the rRNA structure together. The combined cluster of proteins S8, S12 and S17 appears to hold together the shoulder and platform of the 30S subunit.</text>
</comment>
<comment type="subunit">
    <text evidence="2">Part of the 30S ribosomal subunit. Contacts proteins S8 and S17. May interact with IF1 in the 30S initiation complex.</text>
</comment>
<comment type="similarity">
    <text evidence="2">Belongs to the universal ribosomal protein uS12 family.</text>
</comment>
<dbReference type="EMBL" id="AE014299">
    <property type="protein sequence ID" value="AAN53311.1"/>
    <property type="molecule type" value="Genomic_DNA"/>
</dbReference>
<dbReference type="RefSeq" id="NP_715866.1">
    <property type="nucleotide sequence ID" value="NC_004347.2"/>
</dbReference>
<dbReference type="RefSeq" id="WP_011070612.1">
    <property type="nucleotide sequence ID" value="NZ_CP053946.1"/>
</dbReference>
<dbReference type="SMR" id="P59166"/>
<dbReference type="STRING" id="211586.SO_0226"/>
<dbReference type="PaxDb" id="211586-SO_0226"/>
<dbReference type="GeneID" id="75190624"/>
<dbReference type="KEGG" id="son:SO_0226"/>
<dbReference type="PATRIC" id="fig|211586.12.peg.214"/>
<dbReference type="eggNOG" id="COG0048">
    <property type="taxonomic scope" value="Bacteria"/>
</dbReference>
<dbReference type="HOGENOM" id="CLU_104295_1_2_6"/>
<dbReference type="OrthoDB" id="9802366at2"/>
<dbReference type="PhylomeDB" id="P59166"/>
<dbReference type="BioCyc" id="SONE211586:G1GMP-215-MONOMER"/>
<dbReference type="Proteomes" id="UP000008186">
    <property type="component" value="Chromosome"/>
</dbReference>
<dbReference type="GO" id="GO:0005840">
    <property type="term" value="C:ribosome"/>
    <property type="evidence" value="ECO:0000318"/>
    <property type="project" value="GO_Central"/>
</dbReference>
<dbReference type="GO" id="GO:0015935">
    <property type="term" value="C:small ribosomal subunit"/>
    <property type="evidence" value="ECO:0007669"/>
    <property type="project" value="InterPro"/>
</dbReference>
<dbReference type="GO" id="GO:0019843">
    <property type="term" value="F:rRNA binding"/>
    <property type="evidence" value="ECO:0007669"/>
    <property type="project" value="UniProtKB-UniRule"/>
</dbReference>
<dbReference type="GO" id="GO:0003735">
    <property type="term" value="F:structural constituent of ribosome"/>
    <property type="evidence" value="ECO:0000318"/>
    <property type="project" value="GO_Central"/>
</dbReference>
<dbReference type="GO" id="GO:0000049">
    <property type="term" value="F:tRNA binding"/>
    <property type="evidence" value="ECO:0007669"/>
    <property type="project" value="UniProtKB-UniRule"/>
</dbReference>
<dbReference type="GO" id="GO:0006412">
    <property type="term" value="P:translation"/>
    <property type="evidence" value="ECO:0000318"/>
    <property type="project" value="GO_Central"/>
</dbReference>
<dbReference type="CDD" id="cd03368">
    <property type="entry name" value="Ribosomal_S12"/>
    <property type="match status" value="1"/>
</dbReference>
<dbReference type="FunFam" id="2.40.50.140:FF:000001">
    <property type="entry name" value="30S ribosomal protein S12"/>
    <property type="match status" value="1"/>
</dbReference>
<dbReference type="Gene3D" id="2.40.50.140">
    <property type="entry name" value="Nucleic acid-binding proteins"/>
    <property type="match status" value="1"/>
</dbReference>
<dbReference type="HAMAP" id="MF_00403_B">
    <property type="entry name" value="Ribosomal_uS12_B"/>
    <property type="match status" value="1"/>
</dbReference>
<dbReference type="InterPro" id="IPR012340">
    <property type="entry name" value="NA-bd_OB-fold"/>
</dbReference>
<dbReference type="InterPro" id="IPR006032">
    <property type="entry name" value="Ribosomal_uS12"/>
</dbReference>
<dbReference type="InterPro" id="IPR005679">
    <property type="entry name" value="Ribosomal_uS12_bac"/>
</dbReference>
<dbReference type="NCBIfam" id="TIGR00981">
    <property type="entry name" value="rpsL_bact"/>
    <property type="match status" value="1"/>
</dbReference>
<dbReference type="PANTHER" id="PTHR11652">
    <property type="entry name" value="30S RIBOSOMAL PROTEIN S12 FAMILY MEMBER"/>
    <property type="match status" value="1"/>
</dbReference>
<dbReference type="Pfam" id="PF00164">
    <property type="entry name" value="Ribosom_S12_S23"/>
    <property type="match status" value="1"/>
</dbReference>
<dbReference type="PIRSF" id="PIRSF002133">
    <property type="entry name" value="Ribosomal_S12/S23"/>
    <property type="match status" value="1"/>
</dbReference>
<dbReference type="PRINTS" id="PR01034">
    <property type="entry name" value="RIBOSOMALS12"/>
</dbReference>
<dbReference type="SUPFAM" id="SSF50249">
    <property type="entry name" value="Nucleic acid-binding proteins"/>
    <property type="match status" value="1"/>
</dbReference>
<dbReference type="PROSITE" id="PS00055">
    <property type="entry name" value="RIBOSOMAL_S12"/>
    <property type="match status" value="1"/>
</dbReference>
<organism>
    <name type="scientific">Shewanella oneidensis (strain ATCC 700550 / JCM 31522 / CIP 106686 / LMG 19005 / NCIMB 14063 / MR-1)</name>
    <dbReference type="NCBI Taxonomy" id="211586"/>
    <lineage>
        <taxon>Bacteria</taxon>
        <taxon>Pseudomonadati</taxon>
        <taxon>Pseudomonadota</taxon>
        <taxon>Gammaproteobacteria</taxon>
        <taxon>Alteromonadales</taxon>
        <taxon>Shewanellaceae</taxon>
        <taxon>Shewanella</taxon>
    </lineage>
</organism>
<evidence type="ECO:0000250" key="1"/>
<evidence type="ECO:0000255" key="2">
    <source>
        <dbReference type="HAMAP-Rule" id="MF_00403"/>
    </source>
</evidence>
<evidence type="ECO:0000305" key="3"/>
<protein>
    <recommendedName>
        <fullName evidence="2">Small ribosomal subunit protein uS12</fullName>
    </recommendedName>
    <alternativeName>
        <fullName evidence="3">30S ribosomal protein S12</fullName>
    </alternativeName>
</protein>
<name>RS12_SHEON</name>
<sequence>MATVNQLVRKPRAPKVDKTNVPALNACPQKRGVCTRVYTTTPKKPNSALRKVARVRLTNGFEVTSYIGGEGHNLQEHSVILIRGGRVKDLPGVRYHTVRGALDCAGVTSRRQSRSKYGAKRPKS</sequence>
<feature type="chain" id="PRO_0000146304" description="Small ribosomal subunit protein uS12">
    <location>
        <begin position="1"/>
        <end position="124"/>
    </location>
</feature>
<feature type="modified residue" description="3-methylthioaspartic acid" evidence="1">
    <location>
        <position position="89"/>
    </location>
</feature>
<gene>
    <name evidence="2" type="primary">rpsL</name>
    <name type="ordered locus">SO_0226</name>
</gene>